<proteinExistence type="evidence at protein level"/>
<reference key="1">
    <citation type="journal article" date="2004" name="Genome Res.">
        <title>The status, quality, and expansion of the NIH full-length cDNA project: the Mammalian Gene Collection (MGC).</title>
        <authorList>
            <consortium name="The MGC Project Team"/>
        </authorList>
    </citation>
    <scope>NUCLEOTIDE SEQUENCE [LARGE SCALE MRNA]</scope>
    <source>
        <tissue>Placenta</tissue>
    </source>
</reference>
<reference key="2">
    <citation type="submission" date="2007-09" db="UniProtKB">
        <authorList>
            <person name="Lubec G."/>
            <person name="Kang S.U."/>
            <person name="Lubec S."/>
        </authorList>
    </citation>
    <scope>PROTEIN SEQUENCE OF 36-56; 101-107 AND 234-249</scope>
    <scope>IDENTIFICATION BY MASS SPECTROMETRY</scope>
    <source>
        <strain>Sprague-Dawley</strain>
        <tissue>Brain</tissue>
    </source>
</reference>
<protein>
    <recommendedName>
        <fullName>Annexin A8</fullName>
    </recommendedName>
    <alternativeName>
        <fullName>Annexin VIII</fullName>
    </alternativeName>
    <alternativeName>
        <fullName>Annexin-8</fullName>
    </alternativeName>
</protein>
<accession>Q4FZU6</accession>
<gene>
    <name type="primary">Anxa8</name>
</gene>
<keyword id="KW-0041">Annexin</keyword>
<keyword id="KW-0094">Blood coagulation</keyword>
<keyword id="KW-0106">Calcium</keyword>
<keyword id="KW-0111">Calcium/phospholipid-binding</keyword>
<keyword id="KW-0903">Direct protein sequencing</keyword>
<keyword id="KW-0356">Hemostasis</keyword>
<keyword id="KW-0479">Metal-binding</keyword>
<keyword id="KW-1185">Reference proteome</keyword>
<keyword id="KW-0677">Repeat</keyword>
<name>ANXA8_RAT</name>
<organism>
    <name type="scientific">Rattus norvegicus</name>
    <name type="common">Rat</name>
    <dbReference type="NCBI Taxonomy" id="10116"/>
    <lineage>
        <taxon>Eukaryota</taxon>
        <taxon>Metazoa</taxon>
        <taxon>Chordata</taxon>
        <taxon>Craniata</taxon>
        <taxon>Vertebrata</taxon>
        <taxon>Euteleostomi</taxon>
        <taxon>Mammalia</taxon>
        <taxon>Eutheria</taxon>
        <taxon>Euarchontoglires</taxon>
        <taxon>Glires</taxon>
        <taxon>Rodentia</taxon>
        <taxon>Myomorpha</taxon>
        <taxon>Muroidea</taxon>
        <taxon>Muridae</taxon>
        <taxon>Murinae</taxon>
        <taxon>Rattus</taxon>
    </lineage>
</organism>
<comment type="function">
    <text evidence="1">This protein is an anticoagulant protein that acts as an indirect inhibitor of the thromboplastin-specific complex, which is involved in the blood coagulation cascade.</text>
</comment>
<comment type="domain">
    <text>A pair of annexin repeats may form one binding site for calcium and phospholipid.</text>
</comment>
<comment type="similarity">
    <text evidence="2 3">Belongs to the annexin family.</text>
</comment>
<feature type="chain" id="PRO_0000277887" description="Annexin A8">
    <location>
        <begin position="1"/>
        <end position="327"/>
    </location>
</feature>
<feature type="repeat" description="Annexin 1" evidence="2">
    <location>
        <begin position="21"/>
        <end position="92"/>
    </location>
</feature>
<feature type="repeat" description="Annexin 2" evidence="2">
    <location>
        <begin position="93"/>
        <end position="164"/>
    </location>
</feature>
<feature type="repeat" description="Annexin 3" evidence="2">
    <location>
        <begin position="177"/>
        <end position="249"/>
    </location>
</feature>
<feature type="repeat" description="Annexin 4" evidence="2">
    <location>
        <begin position="253"/>
        <end position="324"/>
    </location>
</feature>
<feature type="binding site" evidence="1">
    <location>
        <position position="266"/>
    </location>
    <ligand>
        <name>Ca(2+)</name>
        <dbReference type="ChEBI" id="CHEBI:29108"/>
    </ligand>
</feature>
<feature type="binding site" evidence="1">
    <location>
        <position position="268"/>
    </location>
    <ligand>
        <name>Ca(2+)</name>
        <dbReference type="ChEBI" id="CHEBI:29108"/>
    </ligand>
</feature>
<feature type="binding site" evidence="1">
    <location>
        <position position="270"/>
    </location>
    <ligand>
        <name>Ca(2+)</name>
        <dbReference type="ChEBI" id="CHEBI:29108"/>
    </ligand>
</feature>
<feature type="binding site" evidence="1">
    <location>
        <position position="310"/>
    </location>
    <ligand>
        <name>Ca(2+)</name>
        <dbReference type="ChEBI" id="CHEBI:29108"/>
    </ligand>
</feature>
<dbReference type="EMBL" id="BC099106">
    <property type="protein sequence ID" value="AAH99106.1"/>
    <property type="molecule type" value="mRNA"/>
</dbReference>
<dbReference type="RefSeq" id="NP_001026824.1">
    <property type="nucleotide sequence ID" value="NM_001031654.1"/>
</dbReference>
<dbReference type="SMR" id="Q4FZU6"/>
<dbReference type="FunCoup" id="Q4FZU6">
    <property type="interactions" value="7"/>
</dbReference>
<dbReference type="STRING" id="10116.ENSRNOP00000069969"/>
<dbReference type="iPTMnet" id="Q4FZU6"/>
<dbReference type="PhosphoSitePlus" id="Q4FZU6"/>
<dbReference type="PaxDb" id="10116-ENSRNOP00000027464"/>
<dbReference type="Ensembl" id="ENSRNOT00000082186.2">
    <property type="protein sequence ID" value="ENSRNOP00000069969.1"/>
    <property type="gene ID" value="ENSRNOG00000060949.2"/>
</dbReference>
<dbReference type="GeneID" id="306283"/>
<dbReference type="KEGG" id="rno:306283"/>
<dbReference type="UCSC" id="RGD:1307719">
    <property type="organism name" value="rat"/>
</dbReference>
<dbReference type="AGR" id="RGD:1307719"/>
<dbReference type="CTD" id="653145"/>
<dbReference type="RGD" id="1307719">
    <property type="gene designation" value="Anxa8"/>
</dbReference>
<dbReference type="eggNOG" id="KOG0819">
    <property type="taxonomic scope" value="Eukaryota"/>
</dbReference>
<dbReference type="GeneTree" id="ENSGT00940000161044"/>
<dbReference type="HOGENOM" id="CLU_025300_0_0_1"/>
<dbReference type="InParanoid" id="Q4FZU6"/>
<dbReference type="OMA" id="CYVEHDV"/>
<dbReference type="OrthoDB" id="37886at2759"/>
<dbReference type="PhylomeDB" id="Q4FZU6"/>
<dbReference type="TreeFam" id="TF105452"/>
<dbReference type="PRO" id="PR:Q4FZU6"/>
<dbReference type="Proteomes" id="UP000002494">
    <property type="component" value="Chromosome 16"/>
</dbReference>
<dbReference type="Bgee" id="ENSRNOG00000060949">
    <property type="expression patterns" value="Expressed in lung and 15 other cell types or tissues"/>
</dbReference>
<dbReference type="GO" id="GO:0005737">
    <property type="term" value="C:cytoplasm"/>
    <property type="evidence" value="ECO:0000318"/>
    <property type="project" value="GO_Central"/>
</dbReference>
<dbReference type="GO" id="GO:0005829">
    <property type="term" value="C:cytosol"/>
    <property type="evidence" value="ECO:0000266"/>
    <property type="project" value="RGD"/>
</dbReference>
<dbReference type="GO" id="GO:0031902">
    <property type="term" value="C:late endosome membrane"/>
    <property type="evidence" value="ECO:0000266"/>
    <property type="project" value="RGD"/>
</dbReference>
<dbReference type="GO" id="GO:0005886">
    <property type="term" value="C:plasma membrane"/>
    <property type="evidence" value="ECO:0000266"/>
    <property type="project" value="RGD"/>
</dbReference>
<dbReference type="GO" id="GO:0042383">
    <property type="term" value="C:sarcolemma"/>
    <property type="evidence" value="ECO:0000318"/>
    <property type="project" value="GO_Central"/>
</dbReference>
<dbReference type="GO" id="GO:0012506">
    <property type="term" value="C:vesicle membrane"/>
    <property type="evidence" value="ECO:0000318"/>
    <property type="project" value="GO_Central"/>
</dbReference>
<dbReference type="GO" id="GO:0051015">
    <property type="term" value="F:actin filament binding"/>
    <property type="evidence" value="ECO:0000266"/>
    <property type="project" value="RGD"/>
</dbReference>
<dbReference type="GO" id="GO:0005509">
    <property type="term" value="F:calcium ion binding"/>
    <property type="evidence" value="ECO:0000266"/>
    <property type="project" value="RGD"/>
</dbReference>
<dbReference type="GO" id="GO:0005544">
    <property type="term" value="F:calcium-dependent phospholipid binding"/>
    <property type="evidence" value="ECO:0000266"/>
    <property type="project" value="RGD"/>
</dbReference>
<dbReference type="GO" id="GO:0005547">
    <property type="term" value="F:phosphatidylinositol-3,4,5-trisphosphate binding"/>
    <property type="evidence" value="ECO:0000266"/>
    <property type="project" value="RGD"/>
</dbReference>
<dbReference type="GO" id="GO:0043325">
    <property type="term" value="F:phosphatidylinositol-3,4-bisphosphate binding"/>
    <property type="evidence" value="ECO:0000266"/>
    <property type="project" value="RGD"/>
</dbReference>
<dbReference type="GO" id="GO:0005546">
    <property type="term" value="F:phosphatidylinositol-4,5-bisphosphate binding"/>
    <property type="evidence" value="ECO:0000266"/>
    <property type="project" value="RGD"/>
</dbReference>
<dbReference type="GO" id="GO:0001786">
    <property type="term" value="F:phosphatidylserine binding"/>
    <property type="evidence" value="ECO:0000318"/>
    <property type="project" value="GO_Central"/>
</dbReference>
<dbReference type="GO" id="GO:0007596">
    <property type="term" value="P:blood coagulation"/>
    <property type="evidence" value="ECO:0007669"/>
    <property type="project" value="UniProtKB-KW"/>
</dbReference>
<dbReference type="GO" id="GO:0016197">
    <property type="term" value="P:endosomal transport"/>
    <property type="evidence" value="ECO:0000266"/>
    <property type="project" value="RGD"/>
</dbReference>
<dbReference type="GO" id="GO:0007032">
    <property type="term" value="P:endosome organization"/>
    <property type="evidence" value="ECO:0000266"/>
    <property type="project" value="RGD"/>
</dbReference>
<dbReference type="FunFam" id="1.10.220.10:FF:000001">
    <property type="entry name" value="Annexin"/>
    <property type="match status" value="1"/>
</dbReference>
<dbReference type="FunFam" id="1.10.220.10:FF:000002">
    <property type="entry name" value="Annexin"/>
    <property type="match status" value="1"/>
</dbReference>
<dbReference type="FunFam" id="1.10.220.10:FF:000003">
    <property type="entry name" value="Annexin"/>
    <property type="match status" value="1"/>
</dbReference>
<dbReference type="FunFam" id="1.10.220.10:FF:000004">
    <property type="entry name" value="Annexin"/>
    <property type="match status" value="1"/>
</dbReference>
<dbReference type="Gene3D" id="1.10.220.10">
    <property type="entry name" value="Annexin"/>
    <property type="match status" value="4"/>
</dbReference>
<dbReference type="InterPro" id="IPR001464">
    <property type="entry name" value="Annexin"/>
</dbReference>
<dbReference type="InterPro" id="IPR018502">
    <property type="entry name" value="Annexin_repeat"/>
</dbReference>
<dbReference type="InterPro" id="IPR018252">
    <property type="entry name" value="Annexin_repeat_CS"/>
</dbReference>
<dbReference type="InterPro" id="IPR037104">
    <property type="entry name" value="Annexin_sf"/>
</dbReference>
<dbReference type="InterPro" id="IPR009115">
    <property type="entry name" value="ANX8"/>
</dbReference>
<dbReference type="PANTHER" id="PTHR10502">
    <property type="entry name" value="ANNEXIN"/>
    <property type="match status" value="1"/>
</dbReference>
<dbReference type="PANTHER" id="PTHR10502:SF133">
    <property type="entry name" value="ANNEXIN A8-RELATED"/>
    <property type="match status" value="1"/>
</dbReference>
<dbReference type="Pfam" id="PF00191">
    <property type="entry name" value="Annexin"/>
    <property type="match status" value="4"/>
</dbReference>
<dbReference type="PRINTS" id="PR00196">
    <property type="entry name" value="ANNEXIN"/>
</dbReference>
<dbReference type="PRINTS" id="PR01808">
    <property type="entry name" value="ANNEXINVIII"/>
</dbReference>
<dbReference type="SMART" id="SM00335">
    <property type="entry name" value="ANX"/>
    <property type="match status" value="4"/>
</dbReference>
<dbReference type="SUPFAM" id="SSF47874">
    <property type="entry name" value="Annexin"/>
    <property type="match status" value="1"/>
</dbReference>
<dbReference type="PROSITE" id="PS00223">
    <property type="entry name" value="ANNEXIN_1"/>
    <property type="match status" value="4"/>
</dbReference>
<dbReference type="PROSITE" id="PS51897">
    <property type="entry name" value="ANNEXIN_2"/>
    <property type="match status" value="4"/>
</dbReference>
<evidence type="ECO:0000250" key="1"/>
<evidence type="ECO:0000255" key="2">
    <source>
        <dbReference type="PROSITE-ProRule" id="PRU01245"/>
    </source>
</evidence>
<evidence type="ECO:0000305" key="3"/>
<sequence length="327" mass="36706">MAWWKAWVEQEGVSVKGSSHFNPDPDAETLYKAMKGIGTNEQAIIDVLTKRSNVQRQQIAKSFKAQFGKDLTETLKSELSGKFERLIVALMYPPYRYEAKELHDAMKGLGTKEGVIIEILASRTKNQLREIMKAYEEDYGSTLEEDIQGDTSGYLERILVCLLQGCRDDVSGFVDPGLALQDAQDLHAAGEKILGTDEMKFITILCTRSATHLMRVFEEYEKIANKSIEDSIKSETHGSLEEAMLTVVKCTRNVHSYFAERLYYAMKGAGTLDGTLIRNIVSRSEIDLNLIKSQFQKMYGKTLSSMIMGDTSGYYKTALLNLVGTDL</sequence>